<dbReference type="EMBL" id="AY673996">
    <property type="protein sequence ID" value="AAT79750.1"/>
    <property type="molecule type" value="Genomic_DNA"/>
</dbReference>
<dbReference type="RefSeq" id="YP_063675.1">
    <property type="nucleotide sequence ID" value="NC_006137.1"/>
</dbReference>
<dbReference type="SMR" id="Q6B8N5"/>
<dbReference type="GeneID" id="2944141"/>
<dbReference type="GO" id="GO:0009507">
    <property type="term" value="C:chloroplast"/>
    <property type="evidence" value="ECO:0007669"/>
    <property type="project" value="UniProtKB-SubCell"/>
</dbReference>
<dbReference type="GO" id="GO:0005829">
    <property type="term" value="C:cytosol"/>
    <property type="evidence" value="ECO:0007669"/>
    <property type="project" value="TreeGrafter"/>
</dbReference>
<dbReference type="GO" id="GO:0016020">
    <property type="term" value="C:membrane"/>
    <property type="evidence" value="ECO:0007669"/>
    <property type="project" value="TreeGrafter"/>
</dbReference>
<dbReference type="GO" id="GO:0043022">
    <property type="term" value="F:ribosome binding"/>
    <property type="evidence" value="ECO:0007669"/>
    <property type="project" value="TreeGrafter"/>
</dbReference>
<dbReference type="GO" id="GO:0003743">
    <property type="term" value="F:translation initiation factor activity"/>
    <property type="evidence" value="ECO:0007669"/>
    <property type="project" value="UniProtKB-UniRule"/>
</dbReference>
<dbReference type="GO" id="GO:0032790">
    <property type="term" value="P:ribosome disassembly"/>
    <property type="evidence" value="ECO:0007669"/>
    <property type="project" value="TreeGrafter"/>
</dbReference>
<dbReference type="FunFam" id="3.10.20.80:FF:000001">
    <property type="entry name" value="Translation initiation factor IF-3"/>
    <property type="match status" value="1"/>
</dbReference>
<dbReference type="FunFam" id="3.30.110.10:FF:000001">
    <property type="entry name" value="Translation initiation factor IF-3"/>
    <property type="match status" value="1"/>
</dbReference>
<dbReference type="Gene3D" id="3.30.110.10">
    <property type="entry name" value="Translation initiation factor 3 (IF-3), C-terminal domain"/>
    <property type="match status" value="1"/>
</dbReference>
<dbReference type="Gene3D" id="3.10.20.80">
    <property type="entry name" value="Translation initiation factor 3 (IF-3), N-terminal domain"/>
    <property type="match status" value="1"/>
</dbReference>
<dbReference type="HAMAP" id="MF_00080">
    <property type="entry name" value="IF_3"/>
    <property type="match status" value="1"/>
</dbReference>
<dbReference type="InterPro" id="IPR036788">
    <property type="entry name" value="T_IF-3_C_sf"/>
</dbReference>
<dbReference type="InterPro" id="IPR036787">
    <property type="entry name" value="T_IF-3_N_sf"/>
</dbReference>
<dbReference type="InterPro" id="IPR019813">
    <property type="entry name" value="Translation_initiation_fac3_CS"/>
</dbReference>
<dbReference type="InterPro" id="IPR001288">
    <property type="entry name" value="Translation_initiation_fac_3"/>
</dbReference>
<dbReference type="InterPro" id="IPR019815">
    <property type="entry name" value="Translation_initiation_fac_3_C"/>
</dbReference>
<dbReference type="InterPro" id="IPR019814">
    <property type="entry name" value="Translation_initiation_fac_3_N"/>
</dbReference>
<dbReference type="NCBIfam" id="TIGR00168">
    <property type="entry name" value="infC"/>
    <property type="match status" value="1"/>
</dbReference>
<dbReference type="PANTHER" id="PTHR10938">
    <property type="entry name" value="TRANSLATION INITIATION FACTOR IF-3"/>
    <property type="match status" value="1"/>
</dbReference>
<dbReference type="PANTHER" id="PTHR10938:SF0">
    <property type="entry name" value="TRANSLATION INITIATION FACTOR IF-3, MITOCHONDRIAL"/>
    <property type="match status" value="1"/>
</dbReference>
<dbReference type="Pfam" id="PF00707">
    <property type="entry name" value="IF3_C"/>
    <property type="match status" value="1"/>
</dbReference>
<dbReference type="Pfam" id="PF05198">
    <property type="entry name" value="IF3_N"/>
    <property type="match status" value="1"/>
</dbReference>
<dbReference type="SUPFAM" id="SSF55200">
    <property type="entry name" value="Translation initiation factor IF3, C-terminal domain"/>
    <property type="match status" value="1"/>
</dbReference>
<dbReference type="SUPFAM" id="SSF54364">
    <property type="entry name" value="Translation initiation factor IF3, N-terminal domain"/>
    <property type="match status" value="1"/>
</dbReference>
<dbReference type="PROSITE" id="PS00938">
    <property type="entry name" value="IF3"/>
    <property type="match status" value="1"/>
</dbReference>
<comment type="function">
    <text evidence="1">IF-3 binds to the 30S ribosomal subunit and shifts the equilibrium between 70S ribosomes and their 50S and 30S subunits in favor of the free subunits, thus enhancing the availability of 30S subunits on which protein synthesis initiation begins.</text>
</comment>
<comment type="subunit">
    <text evidence="1">Monomer.</text>
</comment>
<comment type="subcellular location">
    <subcellularLocation>
        <location>Plastid</location>
        <location>Chloroplast</location>
    </subcellularLocation>
</comment>
<comment type="similarity">
    <text evidence="1">Belongs to the IF-3 family.</text>
</comment>
<reference key="1">
    <citation type="journal article" date="2004" name="J. Mol. Evol.">
        <title>Comparative analysis of the complete plastid genome sequence of the red alga Gracilaria tenuistipitata var. liui provides insights into the evolution of rhodoplasts and their relationship to other plastids.</title>
        <authorList>
            <person name="Hagopian J.C."/>
            <person name="Reis M."/>
            <person name="Kitajima J.P."/>
            <person name="Bhattacharya D."/>
            <person name="de Oliveira M.C."/>
        </authorList>
    </citation>
    <scope>NUCLEOTIDE SEQUENCE [LARGE SCALE GENOMIC DNA]</scope>
</reference>
<keyword id="KW-0150">Chloroplast</keyword>
<keyword id="KW-0396">Initiation factor</keyword>
<keyword id="KW-0934">Plastid</keyword>
<keyword id="KW-0648">Protein biosynthesis</keyword>
<accession>Q6B8N5</accession>
<sequence length="181" mass="20804">MLDKSKKERKRNEIEPLINERIKYSQIRLIDTSGSQLGIYSSSEALTIALNAGLDLVLISEKSNPPVCRIIDYGKYKFAQEKKAKEAKKKQHNVTIKEVKMRYKIDVHDYNVRINQAFRFLQGGDKVKANVIFRGREIQHTKLAIELLNKMAQDLSHISEIQQPPAKDGKNMIMILSPKKI</sequence>
<geneLocation type="chloroplast"/>
<gene>
    <name evidence="1" type="primary">infC</name>
    <name type="ordered locus">Grc000169</name>
</gene>
<organism>
    <name type="scientific">Gracilaria tenuistipitata var. liui</name>
    <name type="common">Red alga</name>
    <dbReference type="NCBI Taxonomy" id="285951"/>
    <lineage>
        <taxon>Eukaryota</taxon>
        <taxon>Rhodophyta</taxon>
        <taxon>Florideophyceae</taxon>
        <taxon>Rhodymeniophycidae</taxon>
        <taxon>Gracilariales</taxon>
        <taxon>Gracilariaceae</taxon>
        <taxon>Gracilaria</taxon>
        <taxon>Gracilaria tenuistipitata</taxon>
    </lineage>
</organism>
<evidence type="ECO:0000255" key="1">
    <source>
        <dbReference type="HAMAP-Rule" id="MF_00080"/>
    </source>
</evidence>
<protein>
    <recommendedName>
        <fullName evidence="1">Translation initiation factor IF-3, chloroplastic</fullName>
    </recommendedName>
</protein>
<proteinExistence type="inferred from homology"/>
<feature type="chain" id="PRO_0000177617" description="Translation initiation factor IF-3, chloroplastic">
    <location>
        <begin position="1"/>
        <end position="181"/>
    </location>
</feature>
<name>IF3C_GRATL</name>